<proteinExistence type="evidence at protein level"/>
<accession>Q53FZ2</accession>
<accession>O60363</accession>
<accession>Q13732</accession>
<accession>Q15425</accession>
<accession>Q7KYM6</accession>
<accession>Q9BUA2</accession>
<sequence length="586" mass="66153">MLARVTRKMLRHAKCFQRLAIFGSVRALHKDNRTATPQNFSNYESMKQDFKLGIPEYFNFAKDVLDQWTDKEKAGKKPSNPAFWWINRNGEEMRWSFEELGSLSRKFANILSEACSLQRGDRVILILPRVPEWWLANVACLRTGTVLIPGTTQLTQKDILYRLQSSKANCIITNDVLAPAVDAVASKCENLHSKLIVSENSREGWGNLKELMKHASDSHTCVKTKHNEIMAIFFTSGTSGYPKMTAHTHSSFGLGLSVNGRFWLDLTPSDVMWNTSDTGWAKSAWSSVFSPWIQGACVFTHHLPRFEPTSILQTLSKYPITVFCSAPTVYRMLVQNDITSYKFKSLKHCVSAGEPITPDVTEKWRNKTGLDIYEGYGQTETVLICGNFKGMKIKPGSMGKPSPAFDVKIVDVNGNVLPPGQEGDIGIQVLPNRPFGLFTHYVDNPSKTASTLRGNFYITGDRGYMDKDGYFWFVARADDVILSSGYRIGPFEVENALNEHPSVAESAVVSSPDPIRGEVVKAFVVLNPDYKSHDQEQLIKEIQEHVKKTTAPYKYPRKVEFIQELPKTISGKTKRNELRKKEWKTI</sequence>
<reference key="1">
    <citation type="journal article" date="1994" name="Hypertension">
        <title>Human SA gene locus as a candidate locus for essential hypertension.</title>
        <authorList>
            <person name="Iwai N."/>
            <person name="Ohmichi N."/>
            <person name="Hanai K."/>
            <person name="Nakamura Y."/>
            <person name="Kinoshita M."/>
        </authorList>
    </citation>
    <scope>NUCLEOTIDE SEQUENCE [MRNA] (ISOFORM 1)</scope>
    <source>
        <tissue>Liver</tissue>
    </source>
</reference>
<reference key="2">
    <citation type="journal article" date="1995" name="Hypertension">
        <title>Evaluation of the SA locus in human hypertension.</title>
        <authorList>
            <person name="Nabika T."/>
            <person name="Bonnardeaux A."/>
            <person name="James M."/>
            <person name="Julier C."/>
            <person name="Jeunemaitre X."/>
            <person name="Corvol P."/>
            <person name="Lathrop M."/>
            <person name="Soubrier F."/>
        </authorList>
    </citation>
    <scope>NUCLEOTIDE SEQUENCE [MRNA] (ISOFORM 2)</scope>
    <scope>LACK OF INVOLVEMENT IN HEREDITARY HYPERTENSION</scope>
</reference>
<reference key="3">
    <citation type="journal article" date="1999" name="Genomics">
        <title>Genome duplications and other features in 12 Mb of DNA sequence from human chromosome 16p and 16q.</title>
        <authorList>
            <person name="Loftus B.J."/>
            <person name="Kim U.-J."/>
            <person name="Sneddon V.P."/>
            <person name="Kalush F."/>
            <person name="Brandon R."/>
            <person name="Fuhrmann J."/>
            <person name="Mason T."/>
            <person name="Crosby M.L."/>
            <person name="Barnstead M."/>
            <person name="Cronin L."/>
            <person name="Mays A.D."/>
            <person name="Cao Y."/>
            <person name="Xu R.X."/>
            <person name="Kang H.-L."/>
            <person name="Mitchell S."/>
            <person name="Eichler E.E."/>
            <person name="Harris P.C."/>
            <person name="Venter J.C."/>
            <person name="Adams M.D."/>
        </authorList>
    </citation>
    <scope>NUCLEOTIDE SEQUENCE [LARGE SCALE GENOMIC DNA]</scope>
</reference>
<reference key="4">
    <citation type="submission" date="2005-04" db="EMBL/GenBank/DDBJ databases">
        <authorList>
            <person name="Suzuki Y."/>
            <person name="Sugano S."/>
            <person name="Totoki Y."/>
            <person name="Toyoda A."/>
            <person name="Takeda T."/>
            <person name="Sakaki Y."/>
            <person name="Tanaka A."/>
            <person name="Yokoyama S."/>
        </authorList>
    </citation>
    <scope>NUCLEOTIDE SEQUENCE [LARGE SCALE MRNA] (ISOFORM 1)</scope>
    <scope>VARIANT ASN-367</scope>
    <source>
        <tissue>Kidney</tissue>
    </source>
</reference>
<reference key="5">
    <citation type="journal article" date="2004" name="Genome Res.">
        <title>The status, quality, and expansion of the NIH full-length cDNA project: the Mammalian Gene Collection (MGC).</title>
        <authorList>
            <consortium name="The MGC Project Team"/>
        </authorList>
    </citation>
    <scope>NUCLEOTIDE SEQUENCE [LARGE SCALE MRNA] (ISOFORM 2)</scope>
    <source>
        <tissue>Skin</tissue>
    </source>
</reference>
<reference key="6">
    <citation type="journal article" date="2011" name="BMC Syst. Biol.">
        <title>Initial characterization of the human central proteome.</title>
        <authorList>
            <person name="Burkard T.R."/>
            <person name="Planyavsky M."/>
            <person name="Kaupe I."/>
            <person name="Breitwieser F.P."/>
            <person name="Buerckstuemmer T."/>
            <person name="Bennett K.L."/>
            <person name="Superti-Furga G."/>
            <person name="Colinge J."/>
        </authorList>
    </citation>
    <scope>IDENTIFICATION BY MASS SPECTROMETRY [LARGE SCALE ANALYSIS]</scope>
</reference>
<reference key="7">
    <citation type="journal article" date="2014" name="J. Proteomics">
        <title>An enzyme assisted RP-RPLC approach for in-depth analysis of human liver phosphoproteome.</title>
        <authorList>
            <person name="Bian Y."/>
            <person name="Song C."/>
            <person name="Cheng K."/>
            <person name="Dong M."/>
            <person name="Wang F."/>
            <person name="Huang J."/>
            <person name="Sun D."/>
            <person name="Wang L."/>
            <person name="Ye M."/>
            <person name="Zou H."/>
        </authorList>
    </citation>
    <scope>IDENTIFICATION BY MASS SPECTROMETRY [LARGE SCALE ANALYSIS]</scope>
    <source>
        <tissue>Liver</tissue>
    </source>
</reference>
<reference key="8">
    <citation type="journal article" date="2016" name="Expert Opin. Drug Metab. Toxicol.">
        <title>Xenobiotic/medium chain fatty acid: CoA ligase - a critical review on its role in fatty acid metabolism and the detoxification of benzoic acid and aspirin.</title>
        <authorList>
            <person name="van der Sluis R."/>
            <person name="Erasmus E."/>
        </authorList>
    </citation>
    <scope>REVIEW</scope>
</reference>
<reference key="9">
    <citation type="journal article" date="2002" name="Circulation">
        <title>Association between SAH, an acyl-CoA synthetase gene, and hypertriglyceridemia, obesity, and hypertension.</title>
        <authorList>
            <person name="Iwai N."/>
            <person name="Katsuya T."/>
            <person name="Mannami T."/>
            <person name="Higaki J."/>
            <person name="Ogihara T."/>
            <person name="Kokame K."/>
            <person name="Ogata J."/>
            <person name="Baba S."/>
        </authorList>
    </citation>
    <scope>VARIANT ASN-367</scope>
    <scope>FUNCTION</scope>
    <scope>CATALYTIC ACTIVITY</scope>
</reference>
<reference key="10">
    <citation type="journal article" date="2007" name="J. Hypertens.">
        <title>SAH gene variants are associated with obesity-related hypertension in Caucasians: the PEGASE Study.</title>
        <authorList>
            <person name="Telgmann R."/>
            <person name="Brand E."/>
            <person name="Nicaud V."/>
            <person name="Hagedorn C."/>
            <person name="Beining K."/>
            <person name="Schoenfelder J."/>
            <person name="Brink-Spalink V."/>
            <person name="Schmidt-Petersen K."/>
            <person name="Matanis T."/>
            <person name="Vischer P."/>
            <person name="Nofer J.-R."/>
            <person name="Hasenkamp S."/>
            <person name="Plouin P.-F."/>
            <person name="Drouet L."/>
            <person name="Cambien F."/>
            <person name="Paul M."/>
            <person name="Tiret L."/>
            <person name="Brand-Herrmann S.-M."/>
        </authorList>
    </citation>
    <scope>VARIANT ASN-367</scope>
</reference>
<protein>
    <recommendedName>
        <fullName>Acyl-coenzyme A synthetase ACSM3, mitochondrial</fullName>
        <ecNumber evidence="5">6.2.1.2</ecNumber>
    </recommendedName>
    <alternativeName>
        <fullName>Acyl-CoA synthetase medium-chain family member 3</fullName>
    </alternativeName>
    <alternativeName>
        <fullName>Butyrate--CoA ligase 3</fullName>
    </alternativeName>
    <alternativeName>
        <fullName>Butyryl-coenzyme A synthetase 3</fullName>
    </alternativeName>
    <alternativeName>
        <fullName>Middle-chain acyl-CoA synthetase 3</fullName>
    </alternativeName>
    <alternativeName>
        <fullName>Propionate--CoA ligase</fullName>
        <ecNumber evidence="3">6.2.1.17</ecNumber>
    </alternativeName>
    <alternativeName>
        <fullName>Protein SA homolog</fullName>
    </alternativeName>
</protein>
<comment type="function">
    <text evidence="3 5">Catalyzes the activation of fatty acids by CoA to produce an acyl-CoA, the first step in fatty acid metabolism (PubMed:11772874). Capable of activating medium-chain fatty acids with a preference for isobutyrate among fatty acids with 2-6 carbon atoms (By similarity).</text>
</comment>
<comment type="catalytic activity">
    <reaction evidence="5">
        <text>a medium-chain fatty acid + ATP + CoA = a medium-chain fatty acyl-CoA + AMP + diphosphate</text>
        <dbReference type="Rhea" id="RHEA:48340"/>
        <dbReference type="ChEBI" id="CHEBI:30616"/>
        <dbReference type="ChEBI" id="CHEBI:33019"/>
        <dbReference type="ChEBI" id="CHEBI:57287"/>
        <dbReference type="ChEBI" id="CHEBI:59558"/>
        <dbReference type="ChEBI" id="CHEBI:90546"/>
        <dbReference type="ChEBI" id="CHEBI:456215"/>
        <dbReference type="EC" id="6.2.1.2"/>
    </reaction>
    <physiologicalReaction direction="left-to-right" evidence="11">
        <dbReference type="Rhea" id="RHEA:48341"/>
    </physiologicalReaction>
</comment>
<comment type="catalytic activity">
    <reaction evidence="3">
        <text>propanoate + ATP + CoA = propanoyl-CoA + AMP + diphosphate</text>
        <dbReference type="Rhea" id="RHEA:20373"/>
        <dbReference type="ChEBI" id="CHEBI:17272"/>
        <dbReference type="ChEBI" id="CHEBI:30616"/>
        <dbReference type="ChEBI" id="CHEBI:33019"/>
        <dbReference type="ChEBI" id="CHEBI:57287"/>
        <dbReference type="ChEBI" id="CHEBI:57392"/>
        <dbReference type="ChEBI" id="CHEBI:456215"/>
        <dbReference type="EC" id="6.2.1.17"/>
    </reaction>
    <physiologicalReaction direction="left-to-right" evidence="3">
        <dbReference type="Rhea" id="RHEA:20374"/>
    </physiologicalReaction>
</comment>
<comment type="catalytic activity">
    <reaction evidence="3">
        <text>butanoate + ATP + CoA = butanoyl-CoA + AMP + diphosphate</text>
        <dbReference type="Rhea" id="RHEA:46172"/>
        <dbReference type="ChEBI" id="CHEBI:17968"/>
        <dbReference type="ChEBI" id="CHEBI:30616"/>
        <dbReference type="ChEBI" id="CHEBI:33019"/>
        <dbReference type="ChEBI" id="CHEBI:57287"/>
        <dbReference type="ChEBI" id="CHEBI:57371"/>
        <dbReference type="ChEBI" id="CHEBI:456215"/>
    </reaction>
    <physiologicalReaction direction="left-to-right" evidence="3">
        <dbReference type="Rhea" id="RHEA:46173"/>
    </physiologicalReaction>
</comment>
<comment type="catalytic activity">
    <reaction evidence="3">
        <text>2-methylpropanoate + ATP + CoA = 2-methylpropanoyl-CoA + AMP + diphosphate</text>
        <dbReference type="Rhea" id="RHEA:46176"/>
        <dbReference type="ChEBI" id="CHEBI:30616"/>
        <dbReference type="ChEBI" id="CHEBI:33019"/>
        <dbReference type="ChEBI" id="CHEBI:48944"/>
        <dbReference type="ChEBI" id="CHEBI:57287"/>
        <dbReference type="ChEBI" id="CHEBI:57338"/>
        <dbReference type="ChEBI" id="CHEBI:456215"/>
    </reaction>
    <physiologicalReaction direction="left-to-right" evidence="3">
        <dbReference type="Rhea" id="RHEA:46177"/>
    </physiologicalReaction>
</comment>
<comment type="catalytic activity">
    <reaction evidence="3">
        <text>2-methylbutanoate + ATP + CoA = 2-methylbutanoyl-CoA + AMP + diphosphate</text>
        <dbReference type="Rhea" id="RHEA:46180"/>
        <dbReference type="ChEBI" id="CHEBI:30616"/>
        <dbReference type="ChEBI" id="CHEBI:33019"/>
        <dbReference type="ChEBI" id="CHEBI:48946"/>
        <dbReference type="ChEBI" id="CHEBI:57287"/>
        <dbReference type="ChEBI" id="CHEBI:57336"/>
        <dbReference type="ChEBI" id="CHEBI:456215"/>
    </reaction>
    <physiologicalReaction direction="left-to-right" evidence="3">
        <dbReference type="Rhea" id="RHEA:46181"/>
    </physiologicalReaction>
</comment>
<comment type="catalytic activity">
    <reaction evidence="5">
        <text>octanoate + ATP + CoA = octanoyl-CoA + AMP + diphosphate</text>
        <dbReference type="Rhea" id="RHEA:33631"/>
        <dbReference type="ChEBI" id="CHEBI:25646"/>
        <dbReference type="ChEBI" id="CHEBI:30616"/>
        <dbReference type="ChEBI" id="CHEBI:33019"/>
        <dbReference type="ChEBI" id="CHEBI:57287"/>
        <dbReference type="ChEBI" id="CHEBI:57386"/>
        <dbReference type="ChEBI" id="CHEBI:456215"/>
    </reaction>
    <physiologicalReaction direction="left-to-right" evidence="11">
        <dbReference type="Rhea" id="RHEA:33632"/>
    </physiologicalReaction>
</comment>
<comment type="cofactor">
    <cofactor evidence="2">
        <name>Mg(2+)</name>
        <dbReference type="ChEBI" id="CHEBI:18420"/>
    </cofactor>
    <cofactor evidence="2">
        <name>Mn(2+)</name>
        <dbReference type="ChEBI" id="CHEBI:29035"/>
    </cofactor>
</comment>
<comment type="interaction">
    <interactant intactId="EBI-25887341">
        <id>Q53FZ2-2</id>
    </interactant>
    <interactant intactId="EBI-2432309">
        <id>Q92876</id>
        <label>KLK6</label>
    </interactant>
    <organismsDiffer>false</organismsDiffer>
    <experiments>3</experiments>
</comment>
<comment type="subcellular location">
    <subcellularLocation>
        <location evidence="5">Mitochondrion</location>
    </subcellularLocation>
    <subcellularLocation>
        <location evidence="3">Mitochondrion matrix</location>
    </subcellularLocation>
</comment>
<comment type="alternative products">
    <event type="alternative splicing"/>
    <isoform>
        <id>Q53FZ2-1</id>
        <name>1</name>
        <sequence type="displayed"/>
    </isoform>
    <isoform>
        <id>Q53FZ2-2</id>
        <name>2</name>
        <sequence type="described" ref="VSP_028395 VSP_028396"/>
    </isoform>
</comment>
<comment type="similarity">
    <text evidence="10">Belongs to the ATP-dependent AMP-binding enzyme family.</text>
</comment>
<comment type="caution">
    <text evidence="10">It is uncertain whether Met-1 or Met-9 is the initiator.</text>
</comment>
<comment type="sequence caution" evidence="10">
    <conflict type="erroneous initiation">
        <sequence resource="EMBL-CDS" id="AAC31667"/>
    </conflict>
</comment>
<comment type="sequence caution" evidence="10">
    <conflict type="erroneous initiation">
        <sequence resource="EMBL-CDS" id="BAA03853"/>
    </conflict>
</comment>
<comment type="sequence caution" evidence="10">
    <conflict type="erroneous initiation">
        <sequence resource="EMBL-CDS" id="CAA56369"/>
    </conflict>
</comment>
<evidence type="ECO:0000250" key="1"/>
<evidence type="ECO:0000250" key="2">
    <source>
        <dbReference type="UniProtKB" id="Q08AH1"/>
    </source>
</evidence>
<evidence type="ECO:0000250" key="3">
    <source>
        <dbReference type="UniProtKB" id="Q3UNX5"/>
    </source>
</evidence>
<evidence type="ECO:0000255" key="4"/>
<evidence type="ECO:0000269" key="5">
    <source>
    </source>
</evidence>
<evidence type="ECO:0000269" key="6">
    <source>
    </source>
</evidence>
<evidence type="ECO:0000269" key="7">
    <source ref="4"/>
</evidence>
<evidence type="ECO:0000303" key="8">
    <source>
    </source>
</evidence>
<evidence type="ECO:0000303" key="9">
    <source>
    </source>
</evidence>
<evidence type="ECO:0000305" key="10"/>
<evidence type="ECO:0000305" key="11">
    <source>
    </source>
</evidence>
<gene>
    <name type="primary">ACSM3</name>
    <name type="synonym">SAH</name>
</gene>
<organism>
    <name type="scientific">Homo sapiens</name>
    <name type="common">Human</name>
    <dbReference type="NCBI Taxonomy" id="9606"/>
    <lineage>
        <taxon>Eukaryota</taxon>
        <taxon>Metazoa</taxon>
        <taxon>Chordata</taxon>
        <taxon>Craniata</taxon>
        <taxon>Vertebrata</taxon>
        <taxon>Euteleostomi</taxon>
        <taxon>Mammalia</taxon>
        <taxon>Eutheria</taxon>
        <taxon>Euarchontoglires</taxon>
        <taxon>Primates</taxon>
        <taxon>Haplorrhini</taxon>
        <taxon>Catarrhini</taxon>
        <taxon>Hominidae</taxon>
        <taxon>Homo</taxon>
    </lineage>
</organism>
<name>ACSM3_HUMAN</name>
<dbReference type="EC" id="6.2.1.2" evidence="5"/>
<dbReference type="EC" id="6.2.1.17" evidence="3"/>
<dbReference type="EMBL" id="D16350">
    <property type="protein sequence ID" value="BAA03853.1"/>
    <property type="status" value="ALT_INIT"/>
    <property type="molecule type" value="mRNA"/>
</dbReference>
<dbReference type="EMBL" id="X80062">
    <property type="protein sequence ID" value="CAA56369.1"/>
    <property type="status" value="ALT_INIT"/>
    <property type="molecule type" value="mRNA"/>
</dbReference>
<dbReference type="EMBL" id="AC004381">
    <property type="protein sequence ID" value="AAC31667.1"/>
    <property type="status" value="ALT_INIT"/>
    <property type="molecule type" value="Genomic_DNA"/>
</dbReference>
<dbReference type="EMBL" id="AK223139">
    <property type="protein sequence ID" value="BAD96859.1"/>
    <property type="molecule type" value="mRNA"/>
</dbReference>
<dbReference type="EMBL" id="BC002790">
    <property type="protein sequence ID" value="AAH02790.3"/>
    <property type="molecule type" value="mRNA"/>
</dbReference>
<dbReference type="CCDS" id="CCDS10589.1">
    <molecule id="Q53FZ2-1"/>
</dbReference>
<dbReference type="CCDS" id="CCDS45435.1">
    <molecule id="Q53FZ2-2"/>
</dbReference>
<dbReference type="PIR" id="I54401">
    <property type="entry name" value="I54401"/>
</dbReference>
<dbReference type="PIR" id="S69913">
    <property type="entry name" value="S69913"/>
</dbReference>
<dbReference type="RefSeq" id="NP_005613.2">
    <molecule id="Q53FZ2-1"/>
    <property type="nucleotide sequence ID" value="NM_005622.3"/>
</dbReference>
<dbReference type="RefSeq" id="NP_973729.1">
    <molecule id="Q53FZ2-2"/>
    <property type="nucleotide sequence ID" value="NM_202000.3"/>
</dbReference>
<dbReference type="RefSeq" id="XP_024306138.1">
    <molecule id="Q53FZ2-1"/>
    <property type="nucleotide sequence ID" value="XM_024450370.2"/>
</dbReference>
<dbReference type="RefSeq" id="XP_047290391.1">
    <molecule id="Q53FZ2-1"/>
    <property type="nucleotide sequence ID" value="XM_047434435.1"/>
</dbReference>
<dbReference type="RefSeq" id="XP_047290392.1">
    <molecule id="Q53FZ2-1"/>
    <property type="nucleotide sequence ID" value="XM_047434436.1"/>
</dbReference>
<dbReference type="RefSeq" id="XP_047290393.1">
    <molecule id="Q53FZ2-1"/>
    <property type="nucleotide sequence ID" value="XM_047434437.1"/>
</dbReference>
<dbReference type="RefSeq" id="XP_047290394.1">
    <molecule id="Q53FZ2-1"/>
    <property type="nucleotide sequence ID" value="XM_047434438.1"/>
</dbReference>
<dbReference type="RefSeq" id="XP_047290395.1">
    <molecule id="Q53FZ2-1"/>
    <property type="nucleotide sequence ID" value="XM_047434439.1"/>
</dbReference>
<dbReference type="RefSeq" id="XP_047290396.1">
    <molecule id="Q53FZ2-1"/>
    <property type="nucleotide sequence ID" value="XM_047434440.1"/>
</dbReference>
<dbReference type="RefSeq" id="XP_047290397.1">
    <molecule id="Q53FZ2-2"/>
    <property type="nucleotide sequence ID" value="XM_047434441.1"/>
</dbReference>
<dbReference type="RefSeq" id="XP_054169556.1">
    <molecule id="Q53FZ2-1"/>
    <property type="nucleotide sequence ID" value="XM_054313581.1"/>
</dbReference>
<dbReference type="RefSeq" id="XP_054169557.1">
    <molecule id="Q53FZ2-1"/>
    <property type="nucleotide sequence ID" value="XM_054313582.1"/>
</dbReference>
<dbReference type="RefSeq" id="XP_054169558.1">
    <molecule id="Q53FZ2-1"/>
    <property type="nucleotide sequence ID" value="XM_054313583.1"/>
</dbReference>
<dbReference type="RefSeq" id="XP_054169559.1">
    <molecule id="Q53FZ2-1"/>
    <property type="nucleotide sequence ID" value="XM_054313584.1"/>
</dbReference>
<dbReference type="RefSeq" id="XP_054169560.1">
    <molecule id="Q53FZ2-1"/>
    <property type="nucleotide sequence ID" value="XM_054313585.1"/>
</dbReference>
<dbReference type="RefSeq" id="XP_054169561.1">
    <molecule id="Q53FZ2-1"/>
    <property type="nucleotide sequence ID" value="XM_054313586.1"/>
</dbReference>
<dbReference type="RefSeq" id="XP_054169562.1">
    <molecule id="Q53FZ2-1"/>
    <property type="nucleotide sequence ID" value="XM_054313587.1"/>
</dbReference>
<dbReference type="SMR" id="Q53FZ2"/>
<dbReference type="BioGRID" id="112203">
    <property type="interactions" value="22"/>
</dbReference>
<dbReference type="FunCoup" id="Q53FZ2">
    <property type="interactions" value="289"/>
</dbReference>
<dbReference type="IntAct" id="Q53FZ2">
    <property type="interactions" value="10"/>
</dbReference>
<dbReference type="STRING" id="9606.ENSP00000289416"/>
<dbReference type="SwissLipids" id="SLP:000001189"/>
<dbReference type="iPTMnet" id="Q53FZ2"/>
<dbReference type="PhosphoSitePlus" id="Q53FZ2"/>
<dbReference type="SwissPalm" id="Q53FZ2"/>
<dbReference type="BioMuta" id="ACSM3"/>
<dbReference type="DMDM" id="158706483"/>
<dbReference type="jPOST" id="Q53FZ2"/>
<dbReference type="MassIVE" id="Q53FZ2"/>
<dbReference type="PaxDb" id="9606-ENSP00000289416"/>
<dbReference type="PeptideAtlas" id="Q53FZ2"/>
<dbReference type="ProteomicsDB" id="62470">
    <molecule id="Q53FZ2-1"/>
</dbReference>
<dbReference type="ProteomicsDB" id="62471">
    <molecule id="Q53FZ2-2"/>
</dbReference>
<dbReference type="Pumba" id="Q53FZ2"/>
<dbReference type="Antibodypedia" id="25607">
    <property type="antibodies" value="154 antibodies from 25 providers"/>
</dbReference>
<dbReference type="DNASU" id="6296"/>
<dbReference type="Ensembl" id="ENST00000289416.10">
    <molecule id="Q53FZ2-1"/>
    <property type="protein sequence ID" value="ENSP00000289416.5"/>
    <property type="gene ID" value="ENSG00000005187.12"/>
</dbReference>
<dbReference type="Ensembl" id="ENST00000440284.6">
    <molecule id="Q53FZ2-2"/>
    <property type="protein sequence ID" value="ENSP00000394565.2"/>
    <property type="gene ID" value="ENSG00000005187.12"/>
</dbReference>
<dbReference type="GeneID" id="6296"/>
<dbReference type="KEGG" id="hsa:6296"/>
<dbReference type="MANE-Select" id="ENST00000289416.10">
    <property type="protein sequence ID" value="ENSP00000289416.5"/>
    <property type="RefSeq nucleotide sequence ID" value="NM_005622.4"/>
    <property type="RefSeq protein sequence ID" value="NP_005613.2"/>
</dbReference>
<dbReference type="UCSC" id="uc002dhq.4">
    <molecule id="Q53FZ2-1"/>
    <property type="organism name" value="human"/>
</dbReference>
<dbReference type="AGR" id="HGNC:10522"/>
<dbReference type="CTD" id="6296"/>
<dbReference type="DisGeNET" id="6296"/>
<dbReference type="GeneCards" id="ACSM3"/>
<dbReference type="HGNC" id="HGNC:10522">
    <property type="gene designation" value="ACSM3"/>
</dbReference>
<dbReference type="HPA" id="ENSG00000005187">
    <property type="expression patterns" value="Tissue enhanced (kidney, liver)"/>
</dbReference>
<dbReference type="MalaCards" id="ACSM3"/>
<dbReference type="MIM" id="145505">
    <property type="type" value="gene"/>
</dbReference>
<dbReference type="neXtProt" id="NX_Q53FZ2"/>
<dbReference type="OpenTargets" id="ENSG00000005187"/>
<dbReference type="PharmGKB" id="PA34930"/>
<dbReference type="VEuPathDB" id="HostDB:ENSG00000005187"/>
<dbReference type="eggNOG" id="KOG1175">
    <property type="taxonomic scope" value="Eukaryota"/>
</dbReference>
<dbReference type="GeneTree" id="ENSGT00940000157930"/>
<dbReference type="InParanoid" id="Q53FZ2"/>
<dbReference type="OMA" id="HAWSNLF"/>
<dbReference type="OrthoDB" id="6614653at2759"/>
<dbReference type="PAN-GO" id="Q53FZ2">
    <property type="GO annotations" value="5 GO annotations based on evolutionary models"/>
</dbReference>
<dbReference type="PhylomeDB" id="Q53FZ2"/>
<dbReference type="TreeFam" id="TF354287"/>
<dbReference type="PathwayCommons" id="Q53FZ2"/>
<dbReference type="Reactome" id="R-HSA-77352">
    <property type="pathway name" value="Beta oxidation of butanoyl-CoA to acetyl-CoA"/>
</dbReference>
<dbReference type="SignaLink" id="Q53FZ2"/>
<dbReference type="BioGRID-ORCS" id="6296">
    <property type="hits" value="7 hits in 1153 CRISPR screens"/>
</dbReference>
<dbReference type="ChiTaRS" id="ACSM3">
    <property type="organism name" value="human"/>
</dbReference>
<dbReference type="GeneWiki" id="ACSM3"/>
<dbReference type="GenomeRNAi" id="6296"/>
<dbReference type="Pharos" id="Q53FZ2">
    <property type="development level" value="Tbio"/>
</dbReference>
<dbReference type="PRO" id="PR:Q53FZ2"/>
<dbReference type="Proteomes" id="UP000005640">
    <property type="component" value="Chromosome 16"/>
</dbReference>
<dbReference type="RNAct" id="Q53FZ2">
    <property type="molecule type" value="protein"/>
</dbReference>
<dbReference type="Bgee" id="ENSG00000005187">
    <property type="expression patterns" value="Expressed in left ovary and 122 other cell types or tissues"/>
</dbReference>
<dbReference type="ExpressionAtlas" id="Q53FZ2">
    <property type="expression patterns" value="baseline and differential"/>
</dbReference>
<dbReference type="GO" id="GO:0005759">
    <property type="term" value="C:mitochondrial matrix"/>
    <property type="evidence" value="ECO:0000318"/>
    <property type="project" value="GO_Central"/>
</dbReference>
<dbReference type="GO" id="GO:0005739">
    <property type="term" value="C:mitochondrion"/>
    <property type="evidence" value="ECO:0000314"/>
    <property type="project" value="UniProtKB"/>
</dbReference>
<dbReference type="GO" id="GO:0043759">
    <property type="term" value="F:2-methylbutanoate-CoA ligase activity"/>
    <property type="evidence" value="ECO:0007669"/>
    <property type="project" value="RHEA"/>
</dbReference>
<dbReference type="GO" id="GO:0005524">
    <property type="term" value="F:ATP binding"/>
    <property type="evidence" value="ECO:0007669"/>
    <property type="project" value="UniProtKB-KW"/>
</dbReference>
<dbReference type="GO" id="GO:0015645">
    <property type="term" value="F:fatty acid ligase activity"/>
    <property type="evidence" value="ECO:0000318"/>
    <property type="project" value="GO_Central"/>
</dbReference>
<dbReference type="GO" id="GO:0004321">
    <property type="term" value="F:fatty-acyl-CoA synthase activity"/>
    <property type="evidence" value="ECO:0000318"/>
    <property type="project" value="GO_Central"/>
</dbReference>
<dbReference type="GO" id="GO:0031956">
    <property type="term" value="F:medium-chain fatty acid-CoA ligase activity"/>
    <property type="evidence" value="ECO:0000314"/>
    <property type="project" value="UniProtKB"/>
</dbReference>
<dbReference type="GO" id="GO:0046872">
    <property type="term" value="F:metal ion binding"/>
    <property type="evidence" value="ECO:0007669"/>
    <property type="project" value="UniProtKB-KW"/>
</dbReference>
<dbReference type="GO" id="GO:0018729">
    <property type="term" value="F:propionate CoA-transferase activity"/>
    <property type="evidence" value="ECO:0007669"/>
    <property type="project" value="Ensembl"/>
</dbReference>
<dbReference type="GO" id="GO:0050218">
    <property type="term" value="F:propionate-CoA ligase activity"/>
    <property type="evidence" value="ECO:0007669"/>
    <property type="project" value="UniProtKB-EC"/>
</dbReference>
<dbReference type="GO" id="GO:0006637">
    <property type="term" value="P:acyl-CoA metabolic process"/>
    <property type="evidence" value="ECO:0000318"/>
    <property type="project" value="GO_Central"/>
</dbReference>
<dbReference type="GO" id="GO:0042632">
    <property type="term" value="P:cholesterol homeostasis"/>
    <property type="evidence" value="ECO:0000303"/>
    <property type="project" value="BHF-UCL"/>
</dbReference>
<dbReference type="GO" id="GO:0006633">
    <property type="term" value="P:fatty acid biosynthetic process"/>
    <property type="evidence" value="ECO:0000318"/>
    <property type="project" value="GO_Central"/>
</dbReference>
<dbReference type="GO" id="GO:0008217">
    <property type="term" value="P:regulation of blood pressure"/>
    <property type="evidence" value="ECO:0000304"/>
    <property type="project" value="ProtInc"/>
</dbReference>
<dbReference type="CDD" id="cd05928">
    <property type="entry name" value="MACS_euk"/>
    <property type="match status" value="1"/>
</dbReference>
<dbReference type="FunFam" id="3.40.50.12780:FF:000007">
    <property type="entry name" value="Acyl-coenzyme A synthetase ACSM2A, mitochondrial"/>
    <property type="match status" value="1"/>
</dbReference>
<dbReference type="FunFam" id="3.30.300.30:FF:000005">
    <property type="entry name" value="Acyl-coenzyme A synthetase ACSM5, mitochondrial"/>
    <property type="match status" value="1"/>
</dbReference>
<dbReference type="Gene3D" id="3.30.300.30">
    <property type="match status" value="1"/>
</dbReference>
<dbReference type="Gene3D" id="3.40.50.12780">
    <property type="entry name" value="N-terminal domain of ligase-like"/>
    <property type="match status" value="1"/>
</dbReference>
<dbReference type="InterPro" id="IPR025110">
    <property type="entry name" value="AMP-bd_C"/>
</dbReference>
<dbReference type="InterPro" id="IPR045851">
    <property type="entry name" value="AMP-bd_C_sf"/>
</dbReference>
<dbReference type="InterPro" id="IPR020845">
    <property type="entry name" value="AMP-binding_CS"/>
</dbReference>
<dbReference type="InterPro" id="IPR000873">
    <property type="entry name" value="AMP-dep_synth/lig_dom"/>
</dbReference>
<dbReference type="InterPro" id="IPR042099">
    <property type="entry name" value="ANL_N_sf"/>
</dbReference>
<dbReference type="InterPro" id="IPR051087">
    <property type="entry name" value="Mitochondrial_ACSM"/>
</dbReference>
<dbReference type="PANTHER" id="PTHR43605">
    <property type="entry name" value="ACYL-COENZYME A SYNTHETASE"/>
    <property type="match status" value="1"/>
</dbReference>
<dbReference type="PANTHER" id="PTHR43605:SF7">
    <property type="entry name" value="ACYL-COENZYME A SYNTHETASE ACSM3, MITOCHONDRIAL"/>
    <property type="match status" value="1"/>
</dbReference>
<dbReference type="Pfam" id="PF00501">
    <property type="entry name" value="AMP-binding"/>
    <property type="match status" value="1"/>
</dbReference>
<dbReference type="Pfam" id="PF13193">
    <property type="entry name" value="AMP-binding_C"/>
    <property type="match status" value="1"/>
</dbReference>
<dbReference type="SUPFAM" id="SSF56801">
    <property type="entry name" value="Acetyl-CoA synthetase-like"/>
    <property type="match status" value="1"/>
</dbReference>
<dbReference type="PROSITE" id="PS00455">
    <property type="entry name" value="AMP_BINDING"/>
    <property type="match status" value="1"/>
</dbReference>
<keyword id="KW-0007">Acetylation</keyword>
<keyword id="KW-0025">Alternative splicing</keyword>
<keyword id="KW-0067">ATP-binding</keyword>
<keyword id="KW-0276">Fatty acid metabolism</keyword>
<keyword id="KW-0436">Ligase</keyword>
<keyword id="KW-0443">Lipid metabolism</keyword>
<keyword id="KW-0460">Magnesium</keyword>
<keyword id="KW-0479">Metal-binding</keyword>
<keyword id="KW-0496">Mitochondrion</keyword>
<keyword id="KW-0547">Nucleotide-binding</keyword>
<keyword id="KW-1267">Proteomics identification</keyword>
<keyword id="KW-1185">Reference proteome</keyword>
<keyword id="KW-0809">Transit peptide</keyword>
<feature type="transit peptide" description="Mitochondrion" evidence="4">
    <location>
        <begin position="1"/>
        <end position="27"/>
    </location>
</feature>
<feature type="chain" id="PRO_0000306097" description="Acyl-coenzyme A synthetase ACSM3, mitochondrial">
    <location>
        <begin position="28"/>
        <end position="586"/>
    </location>
</feature>
<feature type="binding site" evidence="1">
    <location>
        <begin position="235"/>
        <end position="243"/>
    </location>
    <ligand>
        <name>ATP</name>
        <dbReference type="ChEBI" id="CHEBI:30616"/>
    </ligand>
</feature>
<feature type="binding site" evidence="1">
    <location>
        <begin position="374"/>
        <end position="379"/>
    </location>
    <ligand>
        <name>ATP</name>
        <dbReference type="ChEBI" id="CHEBI:30616"/>
    </ligand>
</feature>
<feature type="binding site" evidence="1">
    <location>
        <position position="461"/>
    </location>
    <ligand>
        <name>ATP</name>
        <dbReference type="ChEBI" id="CHEBI:30616"/>
    </ligand>
</feature>
<feature type="binding site" evidence="1">
    <location>
        <position position="476"/>
    </location>
    <ligand>
        <name>ATP</name>
        <dbReference type="ChEBI" id="CHEBI:30616"/>
    </ligand>
</feature>
<feature type="binding site" evidence="1">
    <location>
        <position position="572"/>
    </location>
    <ligand>
        <name>ATP</name>
        <dbReference type="ChEBI" id="CHEBI:30616"/>
    </ligand>
</feature>
<feature type="modified residue" description="N6-succinyllysine" evidence="3">
    <location>
        <position position="73"/>
    </location>
</feature>
<feature type="modified residue" description="N6-succinyllysine" evidence="3">
    <location>
        <position position="106"/>
    </location>
</feature>
<feature type="modified residue" description="N6-acetyllysine" evidence="3">
    <location>
        <position position="157"/>
    </location>
</feature>
<feature type="splice variant" id="VSP_028395" description="In isoform 2." evidence="8 9">
    <original>IVDVNGNVLPPGQEGDIGIQVLPNRPFGLF</original>
    <variation>VCTSPSRRMFNNPICTLPTYRLPPYKLSLL</variation>
    <location>
        <begin position="409"/>
        <end position="438"/>
    </location>
</feature>
<feature type="splice variant" id="VSP_028396" description="In isoform 2." evidence="8 9">
    <location>
        <begin position="439"/>
        <end position="586"/>
    </location>
</feature>
<feature type="sequence variant" id="VAR_035249" description="In dbSNP:rs5713.">
    <original>L</original>
    <variation>P</variation>
    <location>
        <position position="100"/>
    </location>
</feature>
<feature type="sequence variant" id="VAR_048239" description="In dbSNP:rs13306603.">
    <original>D</original>
    <variation>H</variation>
    <location>
        <position position="270"/>
    </location>
</feature>
<feature type="sequence variant" id="VAR_035250" description="In dbSNP:rs7196188.">
    <original>P</original>
    <variation>T</variation>
    <location>
        <position position="308"/>
    </location>
</feature>
<feature type="sequence variant" id="VAR_035251" description="In dbSNP:rs5716." evidence="5 6 7">
    <original>K</original>
    <variation>N</variation>
    <location>
        <position position="367"/>
    </location>
</feature>
<feature type="sequence conflict" description="In Ref. 1; BAA03853." evidence="10" ref="1">
    <original>E</original>
    <variation>R</variation>
    <location>
        <position position="132"/>
    </location>
</feature>
<feature type="sequence conflict" description="In Ref. 1; BAA03853." evidence="10" ref="1">
    <original>G</original>
    <variation>A</variation>
    <location>
        <position position="237"/>
    </location>
</feature>
<feature type="sequence conflict" description="In Ref. 1; BAA03853." evidence="10" ref="1">
    <original>T</original>
    <variation>S</variation>
    <location>
        <position position="245"/>
    </location>
</feature>
<feature type="sequence conflict" description="In Ref. 4; BAD96859." evidence="10" ref="4">
    <original>V</original>
    <variation>D</variation>
    <location>
        <position position="407"/>
    </location>
</feature>
<feature type="sequence conflict" description="In Ref. 1; BAA03853." evidence="10" ref="1">
    <original>G</original>
    <variation>A</variation>
    <location>
        <position position="463"/>
    </location>
</feature>
<feature type="sequence conflict" description="In Ref. 1; BAA03853." evidence="10" ref="1">
    <original>I</original>
    <variation>V</variation>
    <location>
        <position position="569"/>
    </location>
</feature>